<gene>
    <name evidence="1" type="primary">nfi</name>
    <name type="ordered locus">SeHA_C4499</name>
</gene>
<sequence>MDLASLRAQQIELASSVCREDRLDKDPPAFIGGADVGFEQGGEVTRAAMVLLKYPSLELVEYKVARIATTMPYIPGFLSFREYPALLAAWEQLSQKPDLLFVDGHGISHPRRLGVASHFGLLVDVPTIGVAKKRLCGKFEPLSTEPGALSPLMDKGEQLAWVWRSKARCNPLFIATGHRVSTDSALAWVQRCMKGYRLPEPTRWADAVASGRPAFVRWQEIQR</sequence>
<organism>
    <name type="scientific">Salmonella heidelberg (strain SL476)</name>
    <dbReference type="NCBI Taxonomy" id="454169"/>
    <lineage>
        <taxon>Bacteria</taxon>
        <taxon>Pseudomonadati</taxon>
        <taxon>Pseudomonadota</taxon>
        <taxon>Gammaproteobacteria</taxon>
        <taxon>Enterobacterales</taxon>
        <taxon>Enterobacteriaceae</taxon>
        <taxon>Salmonella</taxon>
    </lineage>
</organism>
<dbReference type="EC" id="3.1.21.7" evidence="1"/>
<dbReference type="EMBL" id="CP001120">
    <property type="protein sequence ID" value="ACF69709.1"/>
    <property type="molecule type" value="Genomic_DNA"/>
</dbReference>
<dbReference type="RefSeq" id="WP_000362363.1">
    <property type="nucleotide sequence ID" value="NC_011083.1"/>
</dbReference>
<dbReference type="SMR" id="B4TCT7"/>
<dbReference type="KEGG" id="seh:SeHA_C4499"/>
<dbReference type="HOGENOM" id="CLU_047631_1_0_6"/>
<dbReference type="Proteomes" id="UP000001866">
    <property type="component" value="Chromosome"/>
</dbReference>
<dbReference type="GO" id="GO:0005737">
    <property type="term" value="C:cytoplasm"/>
    <property type="evidence" value="ECO:0007669"/>
    <property type="project" value="UniProtKB-SubCell"/>
</dbReference>
<dbReference type="GO" id="GO:0043737">
    <property type="term" value="F:deoxyribonuclease V activity"/>
    <property type="evidence" value="ECO:0007669"/>
    <property type="project" value="UniProtKB-UniRule"/>
</dbReference>
<dbReference type="GO" id="GO:0000287">
    <property type="term" value="F:magnesium ion binding"/>
    <property type="evidence" value="ECO:0007669"/>
    <property type="project" value="UniProtKB-UniRule"/>
</dbReference>
<dbReference type="GO" id="GO:0016891">
    <property type="term" value="F:RNA endonuclease activity, producing 5'-phosphomonoesters"/>
    <property type="evidence" value="ECO:0007669"/>
    <property type="project" value="TreeGrafter"/>
</dbReference>
<dbReference type="GO" id="GO:0003727">
    <property type="term" value="F:single-stranded RNA binding"/>
    <property type="evidence" value="ECO:0007669"/>
    <property type="project" value="TreeGrafter"/>
</dbReference>
<dbReference type="GO" id="GO:0006281">
    <property type="term" value="P:DNA repair"/>
    <property type="evidence" value="ECO:0007669"/>
    <property type="project" value="UniProtKB-UniRule"/>
</dbReference>
<dbReference type="CDD" id="cd06559">
    <property type="entry name" value="Endonuclease_V"/>
    <property type="match status" value="1"/>
</dbReference>
<dbReference type="FunFam" id="3.30.2170.10:FF:000001">
    <property type="entry name" value="Endonuclease V"/>
    <property type="match status" value="1"/>
</dbReference>
<dbReference type="Gene3D" id="3.30.2170.10">
    <property type="entry name" value="archaeoglobus fulgidus dsm 4304 superfamily"/>
    <property type="match status" value="1"/>
</dbReference>
<dbReference type="HAMAP" id="MF_00801">
    <property type="entry name" value="Endonuclease_5"/>
    <property type="match status" value="1"/>
</dbReference>
<dbReference type="InterPro" id="IPR007581">
    <property type="entry name" value="Endonuclease-V"/>
</dbReference>
<dbReference type="NCBIfam" id="NF008629">
    <property type="entry name" value="PRK11617.1"/>
    <property type="match status" value="1"/>
</dbReference>
<dbReference type="PANTHER" id="PTHR28511">
    <property type="entry name" value="ENDONUCLEASE V"/>
    <property type="match status" value="1"/>
</dbReference>
<dbReference type="PANTHER" id="PTHR28511:SF1">
    <property type="entry name" value="ENDONUCLEASE V"/>
    <property type="match status" value="1"/>
</dbReference>
<dbReference type="Pfam" id="PF04493">
    <property type="entry name" value="Endonuclease_5"/>
    <property type="match status" value="1"/>
</dbReference>
<accession>B4TCT7</accession>
<proteinExistence type="inferred from homology"/>
<evidence type="ECO:0000255" key="1">
    <source>
        <dbReference type="HAMAP-Rule" id="MF_00801"/>
    </source>
</evidence>
<name>NFI_SALHS</name>
<comment type="function">
    <text evidence="1">DNA repair enzyme involved in the repair of deaminated bases. Selectively cleaves double-stranded DNA at the second phosphodiester bond 3' to a deoxyinosine leaving behind the intact lesion on the nicked DNA.</text>
</comment>
<comment type="catalytic activity">
    <reaction evidence="1">
        <text>Endonucleolytic cleavage at apurinic or apyrimidinic sites to products with a 5'-phosphate.</text>
        <dbReference type="EC" id="3.1.21.7"/>
    </reaction>
</comment>
<comment type="cofactor">
    <cofactor evidence="1">
        <name>Mg(2+)</name>
        <dbReference type="ChEBI" id="CHEBI:18420"/>
    </cofactor>
</comment>
<comment type="subcellular location">
    <subcellularLocation>
        <location evidence="1">Cytoplasm</location>
    </subcellularLocation>
</comment>
<comment type="similarity">
    <text evidence="1">Belongs to the endonuclease V family.</text>
</comment>
<protein>
    <recommendedName>
        <fullName evidence="1">Endonuclease V</fullName>
        <ecNumber evidence="1">3.1.21.7</ecNumber>
    </recommendedName>
    <alternativeName>
        <fullName evidence="1">Deoxyinosine 3'endonuclease</fullName>
    </alternativeName>
    <alternativeName>
        <fullName evidence="1">Deoxyribonuclease V</fullName>
        <shortName evidence="1">DNase V</shortName>
    </alternativeName>
</protein>
<keyword id="KW-0963">Cytoplasm</keyword>
<keyword id="KW-0227">DNA damage</keyword>
<keyword id="KW-0234">DNA repair</keyword>
<keyword id="KW-0255">Endonuclease</keyword>
<keyword id="KW-0378">Hydrolase</keyword>
<keyword id="KW-0460">Magnesium</keyword>
<keyword id="KW-0479">Metal-binding</keyword>
<keyword id="KW-0540">Nuclease</keyword>
<reference key="1">
    <citation type="journal article" date="2011" name="J. Bacteriol.">
        <title>Comparative genomics of 28 Salmonella enterica isolates: evidence for CRISPR-mediated adaptive sublineage evolution.</title>
        <authorList>
            <person name="Fricke W.F."/>
            <person name="Mammel M.K."/>
            <person name="McDermott P.F."/>
            <person name="Tartera C."/>
            <person name="White D.G."/>
            <person name="Leclerc J.E."/>
            <person name="Ravel J."/>
            <person name="Cebula T.A."/>
        </authorList>
    </citation>
    <scope>NUCLEOTIDE SEQUENCE [LARGE SCALE GENOMIC DNA]</scope>
    <source>
        <strain>SL476</strain>
    </source>
</reference>
<feature type="chain" id="PRO_1000191582" description="Endonuclease V">
    <location>
        <begin position="1"/>
        <end position="223"/>
    </location>
</feature>
<feature type="binding site" evidence="1">
    <location>
        <position position="35"/>
    </location>
    <ligand>
        <name>Mg(2+)</name>
        <dbReference type="ChEBI" id="CHEBI:18420"/>
    </ligand>
</feature>
<feature type="binding site" evidence="1">
    <location>
        <position position="103"/>
    </location>
    <ligand>
        <name>Mg(2+)</name>
        <dbReference type="ChEBI" id="CHEBI:18420"/>
    </ligand>
</feature>
<feature type="site" description="Interaction with target DNA" evidence="1">
    <location>
        <position position="73"/>
    </location>
</feature>